<organism>
    <name type="scientific">Thermoplasma volcanium (strain ATCC 51530 / DSM 4299 / JCM 9571 / NBRC 15438 / GSS1)</name>
    <dbReference type="NCBI Taxonomy" id="273116"/>
    <lineage>
        <taxon>Archaea</taxon>
        <taxon>Methanobacteriati</taxon>
        <taxon>Thermoplasmatota</taxon>
        <taxon>Thermoplasmata</taxon>
        <taxon>Thermoplasmatales</taxon>
        <taxon>Thermoplasmataceae</taxon>
        <taxon>Thermoplasma</taxon>
    </lineage>
</organism>
<gene>
    <name evidence="1" type="primary">pyrH</name>
    <name type="ordered locus">TV0585</name>
    <name type="ORF">TVG0573246</name>
</gene>
<accession>Q97B72</accession>
<evidence type="ECO:0000255" key="1">
    <source>
        <dbReference type="HAMAP-Rule" id="MF_01220"/>
    </source>
</evidence>
<dbReference type="EC" id="2.7.4.22" evidence="1"/>
<dbReference type="EMBL" id="BA000011">
    <property type="protein sequence ID" value="BAB59727.1"/>
    <property type="molecule type" value="Genomic_DNA"/>
</dbReference>
<dbReference type="RefSeq" id="WP_010916844.1">
    <property type="nucleotide sequence ID" value="NC_002689.2"/>
</dbReference>
<dbReference type="SMR" id="Q97B72"/>
<dbReference type="STRING" id="273116.gene:9381372"/>
<dbReference type="PaxDb" id="273116-14324800"/>
<dbReference type="GeneID" id="1441692"/>
<dbReference type="KEGG" id="tvo:TVG0573246"/>
<dbReference type="eggNOG" id="arCOG00858">
    <property type="taxonomic scope" value="Archaea"/>
</dbReference>
<dbReference type="HOGENOM" id="CLU_079546_0_0_2"/>
<dbReference type="OrthoDB" id="372251at2157"/>
<dbReference type="PhylomeDB" id="Q97B72"/>
<dbReference type="UniPathway" id="UPA00159">
    <property type="reaction ID" value="UER00275"/>
</dbReference>
<dbReference type="Proteomes" id="UP000001017">
    <property type="component" value="Chromosome"/>
</dbReference>
<dbReference type="GO" id="GO:0005737">
    <property type="term" value="C:cytoplasm"/>
    <property type="evidence" value="ECO:0007669"/>
    <property type="project" value="UniProtKB-SubCell"/>
</dbReference>
<dbReference type="GO" id="GO:0005524">
    <property type="term" value="F:ATP binding"/>
    <property type="evidence" value="ECO:0007669"/>
    <property type="project" value="UniProtKB-KW"/>
</dbReference>
<dbReference type="GO" id="GO:0033862">
    <property type="term" value="F:UMP kinase activity"/>
    <property type="evidence" value="ECO:0007669"/>
    <property type="project" value="UniProtKB-EC"/>
</dbReference>
<dbReference type="GO" id="GO:0044210">
    <property type="term" value="P:'de novo' CTP biosynthetic process"/>
    <property type="evidence" value="ECO:0007669"/>
    <property type="project" value="UniProtKB-UniRule"/>
</dbReference>
<dbReference type="GO" id="GO:0006225">
    <property type="term" value="P:UDP biosynthetic process"/>
    <property type="evidence" value="ECO:0007669"/>
    <property type="project" value="TreeGrafter"/>
</dbReference>
<dbReference type="CDD" id="cd04253">
    <property type="entry name" value="AAK_UMPK-PyrH-Pf"/>
    <property type="match status" value="1"/>
</dbReference>
<dbReference type="Gene3D" id="3.40.1160.10">
    <property type="entry name" value="Acetylglutamate kinase-like"/>
    <property type="match status" value="1"/>
</dbReference>
<dbReference type="HAMAP" id="MF_01220_A">
    <property type="entry name" value="PyrH_A"/>
    <property type="match status" value="1"/>
</dbReference>
<dbReference type="InterPro" id="IPR036393">
    <property type="entry name" value="AceGlu_kinase-like_sf"/>
</dbReference>
<dbReference type="InterPro" id="IPR001048">
    <property type="entry name" value="Asp/Glu/Uridylate_kinase"/>
</dbReference>
<dbReference type="InterPro" id="IPR011817">
    <property type="entry name" value="Uridylate_kinase"/>
</dbReference>
<dbReference type="InterPro" id="IPR011818">
    <property type="entry name" value="Uridylate_kinase_arch/spir"/>
</dbReference>
<dbReference type="NCBIfam" id="TIGR02076">
    <property type="entry name" value="pyrH_arch"/>
    <property type="match status" value="1"/>
</dbReference>
<dbReference type="PANTHER" id="PTHR42833">
    <property type="entry name" value="URIDYLATE KINASE"/>
    <property type="match status" value="1"/>
</dbReference>
<dbReference type="PANTHER" id="PTHR42833:SF4">
    <property type="entry name" value="URIDYLATE KINASE PUMPKIN, CHLOROPLASTIC"/>
    <property type="match status" value="1"/>
</dbReference>
<dbReference type="Pfam" id="PF00696">
    <property type="entry name" value="AA_kinase"/>
    <property type="match status" value="1"/>
</dbReference>
<dbReference type="PIRSF" id="PIRSF005650">
    <property type="entry name" value="Uridylate_kin"/>
    <property type="match status" value="1"/>
</dbReference>
<dbReference type="SUPFAM" id="SSF53633">
    <property type="entry name" value="Carbamate kinase-like"/>
    <property type="match status" value="1"/>
</dbReference>
<proteinExistence type="inferred from homology"/>
<name>PYRH_THEVO</name>
<reference key="1">
    <citation type="journal article" date="2000" name="Proc. Natl. Acad. Sci. U.S.A.">
        <title>Archaeal adaptation to higher temperatures revealed by genomic sequence of Thermoplasma volcanium.</title>
        <authorList>
            <person name="Kawashima T."/>
            <person name="Amano N."/>
            <person name="Koike H."/>
            <person name="Makino S."/>
            <person name="Higuchi S."/>
            <person name="Kawashima-Ohya Y."/>
            <person name="Watanabe K."/>
            <person name="Yamazaki M."/>
            <person name="Kanehori K."/>
            <person name="Kawamoto T."/>
            <person name="Nunoshiba T."/>
            <person name="Yamamoto Y."/>
            <person name="Aramaki H."/>
            <person name="Makino K."/>
            <person name="Suzuki M."/>
        </authorList>
    </citation>
    <scope>NUCLEOTIDE SEQUENCE [LARGE SCALE GENOMIC DNA]</scope>
    <source>
        <strain>ATCC 51530 / DSM 4299 / JCM 9571 / NBRC 15438 / GSS1</strain>
    </source>
</reference>
<comment type="function">
    <text evidence="1">Catalyzes the reversible phosphorylation of UMP to UDP.</text>
</comment>
<comment type="catalytic activity">
    <reaction evidence="1">
        <text>UMP + ATP = UDP + ADP</text>
        <dbReference type="Rhea" id="RHEA:24400"/>
        <dbReference type="ChEBI" id="CHEBI:30616"/>
        <dbReference type="ChEBI" id="CHEBI:57865"/>
        <dbReference type="ChEBI" id="CHEBI:58223"/>
        <dbReference type="ChEBI" id="CHEBI:456216"/>
        <dbReference type="EC" id="2.7.4.22"/>
    </reaction>
</comment>
<comment type="activity regulation">
    <text evidence="1">Inhibited by UTP.</text>
</comment>
<comment type="pathway">
    <text evidence="1">Pyrimidine metabolism; CTP biosynthesis via de novo pathway; UDP from UMP (UMPK route): step 1/1.</text>
</comment>
<comment type="subunit">
    <text evidence="1">Homohexamer.</text>
</comment>
<comment type="subcellular location">
    <subcellularLocation>
        <location evidence="1">Cytoplasm</location>
    </subcellularLocation>
</comment>
<comment type="similarity">
    <text evidence="1">Belongs to the UMP kinase family.</text>
</comment>
<feature type="chain" id="PRO_0000143930" description="Uridylate kinase">
    <location>
        <begin position="1"/>
        <end position="227"/>
    </location>
</feature>
<feature type="binding site" evidence="1">
    <location>
        <begin position="11"/>
        <end position="12"/>
    </location>
    <ligand>
        <name>ATP</name>
        <dbReference type="ChEBI" id="CHEBI:30616"/>
    </ligand>
</feature>
<feature type="binding site" evidence="1">
    <location>
        <position position="45"/>
    </location>
    <ligand>
        <name>UMP</name>
        <dbReference type="ChEBI" id="CHEBI:57865"/>
    </ligand>
</feature>
<feature type="binding site" evidence="1">
    <location>
        <position position="46"/>
    </location>
    <ligand>
        <name>ATP</name>
        <dbReference type="ChEBI" id="CHEBI:30616"/>
    </ligand>
</feature>
<feature type="binding site" evidence="1">
    <location>
        <position position="50"/>
    </location>
    <ligand>
        <name>ATP</name>
        <dbReference type="ChEBI" id="CHEBI:30616"/>
    </ligand>
</feature>
<feature type="binding site" evidence="1">
    <location>
        <position position="67"/>
    </location>
    <ligand>
        <name>UMP</name>
        <dbReference type="ChEBI" id="CHEBI:57865"/>
    </ligand>
</feature>
<feature type="binding site" evidence="1">
    <location>
        <begin position="114"/>
        <end position="120"/>
    </location>
    <ligand>
        <name>UMP</name>
        <dbReference type="ChEBI" id="CHEBI:57865"/>
    </ligand>
</feature>
<feature type="binding site" evidence="1">
    <location>
        <position position="140"/>
    </location>
    <ligand>
        <name>ATP</name>
        <dbReference type="ChEBI" id="CHEBI:30616"/>
    </ligand>
</feature>
<feature type="binding site" evidence="1">
    <location>
        <position position="146"/>
    </location>
    <ligand>
        <name>ATP</name>
        <dbReference type="ChEBI" id="CHEBI:30616"/>
    </ligand>
</feature>
<feature type="binding site" evidence="1">
    <location>
        <position position="149"/>
    </location>
    <ligand>
        <name>ATP</name>
        <dbReference type="ChEBI" id="CHEBI:30616"/>
    </ligand>
</feature>
<sequence>MNESIVISLGGSVISGDPIDADYLQSFAKILASSKFKRIGIVTGGGKTARSYISLLRSLGINENMLDEIGIYATRMNALSLASLLKGANPIIPSTVEEAVNLMSEYRFVVMGGTEPGHTTDTVAALLCERSDTDTLINITSVDGVYDLDPNKYKDARRFDTLGYREAITLSTGSSVGAGPNVFMDITALSIAMRSKIKVIVASRDLNNLKNILEGKPSVFTSIEEKA</sequence>
<keyword id="KW-0067">ATP-binding</keyword>
<keyword id="KW-0963">Cytoplasm</keyword>
<keyword id="KW-0418">Kinase</keyword>
<keyword id="KW-0547">Nucleotide-binding</keyword>
<keyword id="KW-0665">Pyrimidine biosynthesis</keyword>
<keyword id="KW-0808">Transferase</keyword>
<protein>
    <recommendedName>
        <fullName evidence="1">Uridylate kinase</fullName>
        <shortName evidence="1">UK</shortName>
        <ecNumber evidence="1">2.7.4.22</ecNumber>
    </recommendedName>
    <alternativeName>
        <fullName evidence="1">Uridine monophosphate kinase</fullName>
        <shortName evidence="1">UMP kinase</shortName>
        <shortName evidence="1">UMPK</shortName>
    </alternativeName>
</protein>